<name>PMTG_ARATH</name>
<comment type="subcellular location">
    <subcellularLocation>
        <location evidence="2">Endoplasmic reticulum membrane</location>
        <topology evidence="2">Single-pass type II membrane protein</topology>
    </subcellularLocation>
</comment>
<comment type="similarity">
    <text evidence="2">Belongs to the methyltransferase superfamily.</text>
</comment>
<protein>
    <recommendedName>
        <fullName>Probable methyltransferase PMT16</fullName>
        <ecNumber>2.1.1.-</ecNumber>
    </recommendedName>
</protein>
<organism>
    <name type="scientific">Arabidopsis thaliana</name>
    <name type="common">Mouse-ear cress</name>
    <dbReference type="NCBI Taxonomy" id="3702"/>
    <lineage>
        <taxon>Eukaryota</taxon>
        <taxon>Viridiplantae</taxon>
        <taxon>Streptophyta</taxon>
        <taxon>Embryophyta</taxon>
        <taxon>Tracheophyta</taxon>
        <taxon>Spermatophyta</taxon>
        <taxon>Magnoliopsida</taxon>
        <taxon>eudicotyledons</taxon>
        <taxon>Gunneridae</taxon>
        <taxon>Pentapetalae</taxon>
        <taxon>rosids</taxon>
        <taxon>malvids</taxon>
        <taxon>Brassicales</taxon>
        <taxon>Brassicaceae</taxon>
        <taxon>Camelineae</taxon>
        <taxon>Arabidopsis</taxon>
    </lineage>
</organism>
<keyword id="KW-0256">Endoplasmic reticulum</keyword>
<keyword id="KW-0325">Glycoprotein</keyword>
<keyword id="KW-0472">Membrane</keyword>
<keyword id="KW-0489">Methyltransferase</keyword>
<keyword id="KW-1185">Reference proteome</keyword>
<keyword id="KW-0735">Signal-anchor</keyword>
<keyword id="KW-0808">Transferase</keyword>
<keyword id="KW-0812">Transmembrane</keyword>
<keyword id="KW-1133">Transmembrane helix</keyword>
<sequence>MNLFTRISSRTKKANLYYVTLVALLCIASYLLGIWQNTAVNPRAAFDDSDGTPCEGFTRPNSTKDLDFDAHHNIQDPPPVTETAVSFPSCAAALSEHTPCEDAKRSLKFSRERLEYRQRHCPEREEILKCRIPAPYGYKTPFRWPASRDVAWFANVPHTELTVEKKNQNWVRYENDRFWFPGGGTMFPRGADAYIDDIGRLIDLSDGSIRTAIDTGCGVASFGAYLLSRNITTMSFAPRDTHEAQVQFALERGVPAMIGIMATIRLPYPSRAFDLAHCSRCLIPWGQNDGAYLMEVDRVLRPGGYWILSGPPINWQKRWKGWERTMDDLNAEQTQIEQVARSLCWKKVVQRDDLAIWQKPFNHIDCKKTREVLKNPEFCRHDQDPDMAWYTKMDSCLTPLPEVDDAEDLKTVAGGKVEKWPARLNAIPPRVNKGALEEITPEAFLENTKLWKQRVSYYKKLDYQLGETGRYRNLVDMNAYLGGFAAALADDPVWVMNVVPVEAKLNTLGVIYERGLIGTYQNWCEAMSTYPRTYDFIHADSVFTLYQGQCEPEEILLEMDRILRPGGGVIIRDDVDVLIKVKELTKGLEWEGRIADHEKGPHEREKIYYAVKQYWTVPAPDEDKNNTSALS</sequence>
<dbReference type="EC" id="2.1.1.-"/>
<dbReference type="EMBL" id="AC004665">
    <property type="protein sequence ID" value="AAC28550.1"/>
    <property type="molecule type" value="Genomic_DNA"/>
</dbReference>
<dbReference type="EMBL" id="CP002685">
    <property type="protein sequence ID" value="AEC10597.1"/>
    <property type="molecule type" value="Genomic_DNA"/>
</dbReference>
<dbReference type="PIR" id="T02472">
    <property type="entry name" value="T02472"/>
</dbReference>
<dbReference type="RefSeq" id="NP_182099.1">
    <property type="nucleotide sequence ID" value="NM_130138.3"/>
</dbReference>
<dbReference type="FunCoup" id="O80844">
    <property type="interactions" value="57"/>
</dbReference>
<dbReference type="STRING" id="3702.O80844"/>
<dbReference type="GlyGen" id="O80844">
    <property type="glycosylation" value="3 sites"/>
</dbReference>
<dbReference type="iPTMnet" id="O80844"/>
<dbReference type="PaxDb" id="3702-AT2G45750.1"/>
<dbReference type="ProteomicsDB" id="226283"/>
<dbReference type="EnsemblPlants" id="AT2G45750.1">
    <property type="protein sequence ID" value="AT2G45750.1"/>
    <property type="gene ID" value="AT2G45750"/>
</dbReference>
<dbReference type="GeneID" id="819183"/>
<dbReference type="Gramene" id="AT2G45750.1">
    <property type="protein sequence ID" value="AT2G45750.1"/>
    <property type="gene ID" value="AT2G45750"/>
</dbReference>
<dbReference type="KEGG" id="ath:AT2G45750"/>
<dbReference type="Araport" id="AT2G45750"/>
<dbReference type="TAIR" id="AT2G45750"/>
<dbReference type="eggNOG" id="ENOG502QQT2">
    <property type="taxonomic scope" value="Eukaryota"/>
</dbReference>
<dbReference type="HOGENOM" id="CLU_010485_2_2_1"/>
<dbReference type="InParanoid" id="O80844"/>
<dbReference type="OMA" id="HIHCKKT"/>
<dbReference type="PhylomeDB" id="O80844"/>
<dbReference type="PRO" id="PR:O80844"/>
<dbReference type="Proteomes" id="UP000006548">
    <property type="component" value="Chromosome 2"/>
</dbReference>
<dbReference type="ExpressionAtlas" id="O80844">
    <property type="expression patterns" value="baseline and differential"/>
</dbReference>
<dbReference type="GO" id="GO:0005789">
    <property type="term" value="C:endoplasmic reticulum membrane"/>
    <property type="evidence" value="ECO:0007669"/>
    <property type="project" value="UniProtKB-SubCell"/>
</dbReference>
<dbReference type="GO" id="GO:0008168">
    <property type="term" value="F:methyltransferase activity"/>
    <property type="evidence" value="ECO:0007669"/>
    <property type="project" value="UniProtKB-KW"/>
</dbReference>
<dbReference type="GO" id="GO:0032259">
    <property type="term" value="P:methylation"/>
    <property type="evidence" value="ECO:0007669"/>
    <property type="project" value="UniProtKB-KW"/>
</dbReference>
<dbReference type="FunFam" id="3.40.50.150:FF:000123">
    <property type="entry name" value="Putative methyltransferase PMT15"/>
    <property type="match status" value="1"/>
</dbReference>
<dbReference type="Gene3D" id="3.40.50.150">
    <property type="entry name" value="Vaccinia Virus protein VP39"/>
    <property type="match status" value="1"/>
</dbReference>
<dbReference type="InterPro" id="IPR004159">
    <property type="entry name" value="Put_SAM_MeTrfase"/>
</dbReference>
<dbReference type="InterPro" id="IPR029063">
    <property type="entry name" value="SAM-dependent_MTases_sf"/>
</dbReference>
<dbReference type="PANTHER" id="PTHR10108:SF1096">
    <property type="entry name" value="METHYLTRANSFERASE PMT16-RELATED"/>
    <property type="match status" value="1"/>
</dbReference>
<dbReference type="PANTHER" id="PTHR10108">
    <property type="entry name" value="SAM-DEPENDENT METHYLTRANSFERASE"/>
    <property type="match status" value="1"/>
</dbReference>
<dbReference type="Pfam" id="PF03141">
    <property type="entry name" value="Methyltransf_29"/>
    <property type="match status" value="1"/>
</dbReference>
<dbReference type="SUPFAM" id="SSF53335">
    <property type="entry name" value="S-adenosyl-L-methionine-dependent methyltransferases"/>
    <property type="match status" value="2"/>
</dbReference>
<feature type="chain" id="PRO_0000393256" description="Probable methyltransferase PMT16">
    <location>
        <begin position="1"/>
        <end position="631"/>
    </location>
</feature>
<feature type="topological domain" description="Cytoplasmic" evidence="1">
    <location>
        <begin position="1"/>
        <end position="14"/>
    </location>
</feature>
<feature type="transmembrane region" description="Helical; Signal-anchor for type II membrane protein" evidence="1">
    <location>
        <begin position="15"/>
        <end position="35"/>
    </location>
</feature>
<feature type="topological domain" description="Lumenal" evidence="1">
    <location>
        <begin position="36"/>
        <end position="631"/>
    </location>
</feature>
<feature type="glycosylation site" description="N-linked (GlcNAc...) asparagine" evidence="1">
    <location>
        <position position="61"/>
    </location>
</feature>
<feature type="glycosylation site" description="N-linked (GlcNAc...) asparagine" evidence="1">
    <location>
        <position position="230"/>
    </location>
</feature>
<feature type="glycosylation site" description="N-linked (GlcNAc...) asparagine" evidence="1">
    <location>
        <position position="626"/>
    </location>
</feature>
<reference key="1">
    <citation type="journal article" date="1999" name="Nature">
        <title>Sequence and analysis of chromosome 2 of the plant Arabidopsis thaliana.</title>
        <authorList>
            <person name="Lin X."/>
            <person name="Kaul S."/>
            <person name="Rounsley S.D."/>
            <person name="Shea T.P."/>
            <person name="Benito M.-I."/>
            <person name="Town C.D."/>
            <person name="Fujii C.Y."/>
            <person name="Mason T.M."/>
            <person name="Bowman C.L."/>
            <person name="Barnstead M.E."/>
            <person name="Feldblyum T.V."/>
            <person name="Buell C.R."/>
            <person name="Ketchum K.A."/>
            <person name="Lee J.J."/>
            <person name="Ronning C.M."/>
            <person name="Koo H.L."/>
            <person name="Moffat K.S."/>
            <person name="Cronin L.A."/>
            <person name="Shen M."/>
            <person name="Pai G."/>
            <person name="Van Aken S."/>
            <person name="Umayam L."/>
            <person name="Tallon L.J."/>
            <person name="Gill J.E."/>
            <person name="Adams M.D."/>
            <person name="Carrera A.J."/>
            <person name="Creasy T.H."/>
            <person name="Goodman H.M."/>
            <person name="Somerville C.R."/>
            <person name="Copenhaver G.P."/>
            <person name="Preuss D."/>
            <person name="Nierman W.C."/>
            <person name="White O."/>
            <person name="Eisen J.A."/>
            <person name="Salzberg S.L."/>
            <person name="Fraser C.M."/>
            <person name="Venter J.C."/>
        </authorList>
    </citation>
    <scope>NUCLEOTIDE SEQUENCE [LARGE SCALE GENOMIC DNA]</scope>
    <source>
        <strain>cv. Columbia</strain>
    </source>
</reference>
<reference key="2">
    <citation type="journal article" date="2017" name="Plant J.">
        <title>Araport11: a complete reannotation of the Arabidopsis thaliana reference genome.</title>
        <authorList>
            <person name="Cheng C.Y."/>
            <person name="Krishnakumar V."/>
            <person name="Chan A.P."/>
            <person name="Thibaud-Nissen F."/>
            <person name="Schobel S."/>
            <person name="Town C.D."/>
        </authorList>
    </citation>
    <scope>GENOME REANNOTATION</scope>
    <source>
        <strain>cv. Columbia</strain>
    </source>
</reference>
<reference key="3">
    <citation type="journal article" date="2007" name="Plant J.">
        <title>The TUMOROUS SHOOT DEVELOPMENT2 gene of Arabidopsis encoding a putative methyltransferase is required for cell adhesion and co-ordinated plant development.</title>
        <authorList>
            <person name="Krupkova E."/>
            <person name="Immerzeel P."/>
            <person name="Pauly M."/>
            <person name="Schmulling T."/>
        </authorList>
    </citation>
    <scope>GENE FAMILY</scope>
</reference>
<gene>
    <name type="ordered locus">At2g45750</name>
    <name type="ORF">F4I18.27</name>
</gene>
<accession>O80844</accession>
<proteinExistence type="inferred from homology"/>
<evidence type="ECO:0000255" key="1"/>
<evidence type="ECO:0000305" key="2"/>